<keyword id="KW-0238">DNA-binding</keyword>
<keyword id="KW-0539">Nucleus</keyword>
<keyword id="KW-1185">Reference proteome</keyword>
<keyword id="KW-0677">Repeat</keyword>
<keyword id="KW-0804">Transcription</keyword>
<keyword id="KW-0805">Transcription regulation</keyword>
<evidence type="ECO:0000255" key="1">
    <source>
        <dbReference type="PROSITE-ProRule" id="PRU00326"/>
    </source>
</evidence>
<evidence type="ECO:0000256" key="2">
    <source>
        <dbReference type="SAM" id="MobiDB-lite"/>
    </source>
</evidence>
<reference key="1">
    <citation type="journal article" date="1998" name="DNA Res.">
        <title>Structural analysis of Arabidopsis thaliana chromosome 5. VII. Sequence features of the regions of 1,013,767 bp covered by sixteen physically assigned P1 and TAC clones.</title>
        <authorList>
            <person name="Nakamura Y."/>
            <person name="Sato S."/>
            <person name="Asamizu E."/>
            <person name="Kaneko T."/>
            <person name="Kotani H."/>
            <person name="Miyajima N."/>
            <person name="Tabata S."/>
        </authorList>
    </citation>
    <scope>NUCLEOTIDE SEQUENCE [LARGE SCALE GENOMIC DNA]</scope>
    <source>
        <strain>cv. Columbia</strain>
    </source>
</reference>
<reference key="2">
    <citation type="journal article" date="2017" name="Plant J.">
        <title>Araport11: a complete reannotation of the Arabidopsis thaliana reference genome.</title>
        <authorList>
            <person name="Cheng C.Y."/>
            <person name="Krishnakumar V."/>
            <person name="Chan A.P."/>
            <person name="Thibaud-Nissen F."/>
            <person name="Schobel S."/>
            <person name="Town C.D."/>
        </authorList>
    </citation>
    <scope>GENOME REANNOTATION</scope>
    <source>
        <strain>cv. Columbia</strain>
    </source>
</reference>
<reference key="3">
    <citation type="submission" date="2006-07" db="EMBL/GenBank/DDBJ databases">
        <title>Large-scale analysis of RIKEN Arabidopsis full-length (RAFL) cDNAs.</title>
        <authorList>
            <person name="Totoki Y."/>
            <person name="Seki M."/>
            <person name="Ishida J."/>
            <person name="Nakajima M."/>
            <person name="Enju A."/>
            <person name="Kamiya A."/>
            <person name="Narusaka M."/>
            <person name="Shin-i T."/>
            <person name="Nakagawa M."/>
            <person name="Sakamoto N."/>
            <person name="Oishi K."/>
            <person name="Kohara Y."/>
            <person name="Kobayashi M."/>
            <person name="Toyoda A."/>
            <person name="Sakaki Y."/>
            <person name="Sakurai T."/>
            <person name="Iida K."/>
            <person name="Akiyama K."/>
            <person name="Satou M."/>
            <person name="Toyoda T."/>
            <person name="Konagaya A."/>
            <person name="Carninci P."/>
            <person name="Kawai J."/>
            <person name="Hayashizaki Y."/>
            <person name="Shinozaki K."/>
        </authorList>
    </citation>
    <scope>NUCLEOTIDE SEQUENCE [LARGE SCALE MRNA]</scope>
    <source>
        <strain>cv. Columbia</strain>
    </source>
</reference>
<reference key="4">
    <citation type="journal article" date="2008" name="Trends Plant Sci.">
        <title>The plant B3 superfamily.</title>
        <authorList>
            <person name="Swaminathan K."/>
            <person name="Peterson K."/>
            <person name="Jack T."/>
        </authorList>
    </citation>
    <scope>GENE FAMILY</scope>
</reference>
<proteinExistence type="evidence at transcript level"/>
<gene>
    <name type="ordered locus">At5g18000</name>
    <name type="ORF">MCM23.7</name>
</gene>
<sequence>MVKNKAFFGQIMEERDNPAFFKILRREDHSTEMMRMIPHHLIRSISDKSSSFKMVLRVPWGRSWQVKISKNPNFHYMEDRGWNQFVNDNGLGENEYLTFTHEANMCFNVTIFEADGTEMLRPRKTITSSSGRNKREERKSIYKDVKKEEEIESWSESSHPCHKTAESTSGRLTQKQELNLRKKEADKTEKSKTSKKKKVETVSNDSEAGTSSLIPEFKLTIKKSHLLFLGIPKKFVDMHMPTETTMFKIHYPRGKKSWDVTYVVTDVQSRFSGGWSRLAKELGLLVGDVCTFKLIKPTEMRVKVSKE</sequence>
<organism>
    <name type="scientific">Arabidopsis thaliana</name>
    <name type="common">Mouse-ear cress</name>
    <dbReference type="NCBI Taxonomy" id="3702"/>
    <lineage>
        <taxon>Eukaryota</taxon>
        <taxon>Viridiplantae</taxon>
        <taxon>Streptophyta</taxon>
        <taxon>Embryophyta</taxon>
        <taxon>Tracheophyta</taxon>
        <taxon>Spermatophyta</taxon>
        <taxon>Magnoliopsida</taxon>
        <taxon>eudicotyledons</taxon>
        <taxon>Gunneridae</taxon>
        <taxon>Pentapetalae</taxon>
        <taxon>rosids</taxon>
        <taxon>malvids</taxon>
        <taxon>Brassicales</taxon>
        <taxon>Brassicaceae</taxon>
        <taxon>Camelineae</taxon>
        <taxon>Arabidopsis</taxon>
    </lineage>
</organism>
<feature type="chain" id="PRO_0000375161" description="B3 domain-containing protein At5g18000">
    <location>
        <begin position="1"/>
        <end position="307"/>
    </location>
</feature>
<feature type="DNA-binding region" description="TF-B3 1" evidence="1">
    <location>
        <begin position="20"/>
        <end position="115"/>
    </location>
</feature>
<feature type="DNA-binding region" description="TF-B3 2" evidence="1">
    <location>
        <begin position="214"/>
        <end position="307"/>
    </location>
</feature>
<feature type="region of interest" description="Disordered" evidence="2">
    <location>
        <begin position="122"/>
        <end position="141"/>
    </location>
</feature>
<feature type="region of interest" description="Disordered" evidence="2">
    <location>
        <begin position="151"/>
        <end position="209"/>
    </location>
</feature>
<feature type="compositionally biased region" description="Polar residues" evidence="2">
    <location>
        <begin position="166"/>
        <end position="177"/>
    </location>
</feature>
<feature type="compositionally biased region" description="Basic and acidic residues" evidence="2">
    <location>
        <begin position="178"/>
        <end position="192"/>
    </location>
</feature>
<accession>Q9FJG2</accession>
<protein>
    <recommendedName>
        <fullName>B3 domain-containing protein At5g18000</fullName>
    </recommendedName>
</protein>
<name>Y5800_ARATH</name>
<comment type="subcellular location">
    <subcellularLocation>
        <location evidence="1">Nucleus</location>
    </subcellularLocation>
</comment>
<dbReference type="EMBL" id="AB015473">
    <property type="protein sequence ID" value="BAB08399.1"/>
    <property type="molecule type" value="Genomic_DNA"/>
</dbReference>
<dbReference type="EMBL" id="CP002688">
    <property type="protein sequence ID" value="AED92494.1"/>
    <property type="molecule type" value="Genomic_DNA"/>
</dbReference>
<dbReference type="EMBL" id="AK227035">
    <property type="protein sequence ID" value="BAE99096.1"/>
    <property type="molecule type" value="mRNA"/>
</dbReference>
<dbReference type="RefSeq" id="NP_197301.1">
    <property type="nucleotide sequence ID" value="NM_121805.3"/>
</dbReference>
<dbReference type="SMR" id="Q9FJG2"/>
<dbReference type="BioGRID" id="16943">
    <property type="interactions" value="1"/>
</dbReference>
<dbReference type="IntAct" id="Q9FJG2">
    <property type="interactions" value="1"/>
</dbReference>
<dbReference type="STRING" id="3702.Q9FJG2"/>
<dbReference type="PaxDb" id="3702-AT5G18000.1"/>
<dbReference type="ProteomicsDB" id="242933"/>
<dbReference type="EnsemblPlants" id="AT5G18000.1">
    <property type="protein sequence ID" value="AT5G18000.1"/>
    <property type="gene ID" value="AT5G18000"/>
</dbReference>
<dbReference type="GeneID" id="831667"/>
<dbReference type="Gramene" id="AT5G18000.1">
    <property type="protein sequence ID" value="AT5G18000.1"/>
    <property type="gene ID" value="AT5G18000"/>
</dbReference>
<dbReference type="KEGG" id="ath:AT5G18000"/>
<dbReference type="Araport" id="AT5G18000"/>
<dbReference type="TAIR" id="AT5G18000">
    <property type="gene designation" value="VDD"/>
</dbReference>
<dbReference type="eggNOG" id="ENOG502S1D6">
    <property type="taxonomic scope" value="Eukaryota"/>
</dbReference>
<dbReference type="HOGENOM" id="CLU_083136_0_0_1"/>
<dbReference type="InParanoid" id="Q9FJG2"/>
<dbReference type="OMA" id="EMMRMIP"/>
<dbReference type="PhylomeDB" id="Q9FJG2"/>
<dbReference type="PRO" id="PR:Q9FJG2"/>
<dbReference type="Proteomes" id="UP000006548">
    <property type="component" value="Chromosome 5"/>
</dbReference>
<dbReference type="ExpressionAtlas" id="Q9FJG2">
    <property type="expression patterns" value="baseline and differential"/>
</dbReference>
<dbReference type="GO" id="GO:0005634">
    <property type="term" value="C:nucleus"/>
    <property type="evidence" value="ECO:0007669"/>
    <property type="project" value="UniProtKB-SubCell"/>
</dbReference>
<dbReference type="GO" id="GO:0003677">
    <property type="term" value="F:DNA binding"/>
    <property type="evidence" value="ECO:0007669"/>
    <property type="project" value="UniProtKB-KW"/>
</dbReference>
<dbReference type="GO" id="GO:0046982">
    <property type="term" value="F:protein heterodimerization activity"/>
    <property type="evidence" value="ECO:0000353"/>
    <property type="project" value="TAIR"/>
</dbReference>
<dbReference type="GO" id="GO:0009567">
    <property type="term" value="P:double fertilization forming a zygote and endosperm"/>
    <property type="evidence" value="ECO:0000315"/>
    <property type="project" value="TAIR"/>
</dbReference>
<dbReference type="GO" id="GO:0009553">
    <property type="term" value="P:embryo sac development"/>
    <property type="evidence" value="ECO:0000315"/>
    <property type="project" value="TAIR"/>
</dbReference>
<dbReference type="GO" id="GO:0010198">
    <property type="term" value="P:synergid death"/>
    <property type="evidence" value="ECO:0000315"/>
    <property type="project" value="TAIR"/>
</dbReference>
<dbReference type="CDD" id="cd10017">
    <property type="entry name" value="B3_DNA"/>
    <property type="match status" value="2"/>
</dbReference>
<dbReference type="Gene3D" id="2.40.330.10">
    <property type="entry name" value="DNA-binding pseudobarrel domain"/>
    <property type="match status" value="2"/>
</dbReference>
<dbReference type="InterPro" id="IPR003340">
    <property type="entry name" value="B3_DNA-bd"/>
</dbReference>
<dbReference type="InterPro" id="IPR015300">
    <property type="entry name" value="DNA-bd_pseudobarrel_sf"/>
</dbReference>
<dbReference type="InterPro" id="IPR044837">
    <property type="entry name" value="REM16-like"/>
</dbReference>
<dbReference type="PANTHER" id="PTHR31391:SF135">
    <property type="entry name" value="B3 DOMAIN-CONTAINING PROTEIN OS01G0234100-LIKE ISOFORM X1"/>
    <property type="match status" value="1"/>
</dbReference>
<dbReference type="PANTHER" id="PTHR31391">
    <property type="entry name" value="B3 DOMAIN-CONTAINING PROTEIN OS11G0197600-RELATED"/>
    <property type="match status" value="1"/>
</dbReference>
<dbReference type="Pfam" id="PF02362">
    <property type="entry name" value="B3"/>
    <property type="match status" value="2"/>
</dbReference>
<dbReference type="SMART" id="SM01019">
    <property type="entry name" value="B3"/>
    <property type="match status" value="2"/>
</dbReference>
<dbReference type="SUPFAM" id="SSF101936">
    <property type="entry name" value="DNA-binding pseudobarrel domain"/>
    <property type="match status" value="2"/>
</dbReference>
<dbReference type="PROSITE" id="PS50863">
    <property type="entry name" value="B3"/>
    <property type="match status" value="2"/>
</dbReference>